<feature type="chain" id="PRO_1000007380" description="Large ribosomal subunit protein bL28">
    <location>
        <begin position="1"/>
        <end position="69"/>
    </location>
</feature>
<feature type="region of interest" description="Disordered" evidence="2">
    <location>
        <begin position="1"/>
        <end position="27"/>
    </location>
</feature>
<protein>
    <recommendedName>
        <fullName evidence="1">Large ribosomal subunit protein bL28</fullName>
    </recommendedName>
    <alternativeName>
        <fullName evidence="3">50S ribosomal protein L28</fullName>
    </alternativeName>
</protein>
<proteinExistence type="inferred from homology"/>
<accession>A6QC89</accession>
<reference key="1">
    <citation type="journal article" date="2007" name="Proc. Natl. Acad. Sci. U.S.A.">
        <title>Deep-sea vent epsilon-proteobacterial genomes provide insights into emergence of pathogens.</title>
        <authorList>
            <person name="Nakagawa S."/>
            <person name="Takaki Y."/>
            <person name="Shimamura S."/>
            <person name="Reysenbach A.-L."/>
            <person name="Takai K."/>
            <person name="Horikoshi K."/>
        </authorList>
    </citation>
    <scope>NUCLEOTIDE SEQUENCE [LARGE SCALE GENOMIC DNA]</scope>
    <source>
        <strain>NBC37-1</strain>
    </source>
</reference>
<name>RL28_SULNB</name>
<organism>
    <name type="scientific">Sulfurovum sp. (strain NBC37-1)</name>
    <dbReference type="NCBI Taxonomy" id="387093"/>
    <lineage>
        <taxon>Bacteria</taxon>
        <taxon>Pseudomonadati</taxon>
        <taxon>Campylobacterota</taxon>
        <taxon>Epsilonproteobacteria</taxon>
        <taxon>Campylobacterales</taxon>
        <taxon>Sulfurovaceae</taxon>
        <taxon>Sulfurovum</taxon>
    </lineage>
</organism>
<gene>
    <name evidence="1" type="primary">rpmB</name>
    <name type="ordered locus">SUN_2158</name>
</gene>
<keyword id="KW-0687">Ribonucleoprotein</keyword>
<keyword id="KW-0689">Ribosomal protein</keyword>
<sequence>MSRRCSVSGKGPLVGNNVSHANNKTKRRQLPNLRSVKITMEDGTTKRVKVAASTLRTMKKKAAQAAAAN</sequence>
<comment type="similarity">
    <text evidence="1">Belongs to the bacterial ribosomal protein bL28 family.</text>
</comment>
<dbReference type="EMBL" id="AP009179">
    <property type="protein sequence ID" value="BAF73098.1"/>
    <property type="molecule type" value="Genomic_DNA"/>
</dbReference>
<dbReference type="RefSeq" id="WP_012083928.1">
    <property type="nucleotide sequence ID" value="NC_009663.1"/>
</dbReference>
<dbReference type="SMR" id="A6QC89"/>
<dbReference type="STRING" id="387093.SUN_2158"/>
<dbReference type="KEGG" id="sun:SUN_2158"/>
<dbReference type="eggNOG" id="COG0227">
    <property type="taxonomic scope" value="Bacteria"/>
</dbReference>
<dbReference type="HOGENOM" id="CLU_064548_7_0_7"/>
<dbReference type="OrthoDB" id="9805609at2"/>
<dbReference type="Proteomes" id="UP000006378">
    <property type="component" value="Chromosome"/>
</dbReference>
<dbReference type="GO" id="GO:1990904">
    <property type="term" value="C:ribonucleoprotein complex"/>
    <property type="evidence" value="ECO:0007669"/>
    <property type="project" value="UniProtKB-KW"/>
</dbReference>
<dbReference type="GO" id="GO:0005840">
    <property type="term" value="C:ribosome"/>
    <property type="evidence" value="ECO:0007669"/>
    <property type="project" value="UniProtKB-KW"/>
</dbReference>
<dbReference type="GO" id="GO:0003735">
    <property type="term" value="F:structural constituent of ribosome"/>
    <property type="evidence" value="ECO:0007669"/>
    <property type="project" value="InterPro"/>
</dbReference>
<dbReference type="GO" id="GO:0006412">
    <property type="term" value="P:translation"/>
    <property type="evidence" value="ECO:0007669"/>
    <property type="project" value="UniProtKB-UniRule"/>
</dbReference>
<dbReference type="Gene3D" id="2.30.170.40">
    <property type="entry name" value="Ribosomal protein L28/L24"/>
    <property type="match status" value="1"/>
</dbReference>
<dbReference type="HAMAP" id="MF_00373">
    <property type="entry name" value="Ribosomal_bL28"/>
    <property type="match status" value="1"/>
</dbReference>
<dbReference type="InterPro" id="IPR050096">
    <property type="entry name" value="Bacterial_rp_bL28"/>
</dbReference>
<dbReference type="InterPro" id="IPR026569">
    <property type="entry name" value="Ribosomal_bL28"/>
</dbReference>
<dbReference type="InterPro" id="IPR034704">
    <property type="entry name" value="Ribosomal_bL28/bL31-like_sf"/>
</dbReference>
<dbReference type="InterPro" id="IPR001383">
    <property type="entry name" value="Ribosomal_bL28_bact-type"/>
</dbReference>
<dbReference type="InterPro" id="IPR037147">
    <property type="entry name" value="Ribosomal_bL28_sf"/>
</dbReference>
<dbReference type="NCBIfam" id="TIGR00009">
    <property type="entry name" value="L28"/>
    <property type="match status" value="1"/>
</dbReference>
<dbReference type="PANTHER" id="PTHR39080">
    <property type="entry name" value="50S RIBOSOMAL PROTEIN L28"/>
    <property type="match status" value="1"/>
</dbReference>
<dbReference type="PANTHER" id="PTHR39080:SF1">
    <property type="entry name" value="LARGE RIBOSOMAL SUBUNIT PROTEIN BL28A"/>
    <property type="match status" value="1"/>
</dbReference>
<dbReference type="Pfam" id="PF00830">
    <property type="entry name" value="Ribosomal_L28"/>
    <property type="match status" value="1"/>
</dbReference>
<dbReference type="SUPFAM" id="SSF143800">
    <property type="entry name" value="L28p-like"/>
    <property type="match status" value="1"/>
</dbReference>
<evidence type="ECO:0000255" key="1">
    <source>
        <dbReference type="HAMAP-Rule" id="MF_00373"/>
    </source>
</evidence>
<evidence type="ECO:0000256" key="2">
    <source>
        <dbReference type="SAM" id="MobiDB-lite"/>
    </source>
</evidence>
<evidence type="ECO:0000305" key="3"/>